<reference key="1">
    <citation type="journal article" date="2004" name="J. Biol. Chem.">
        <title>The A-superfamily of conotoxins: structural and functional divergence.</title>
        <authorList>
            <person name="Santos A.D."/>
            <person name="McIntosh J.M."/>
            <person name="Hillyard D.R."/>
            <person name="Cruz L.J."/>
            <person name="Olivera B.M."/>
        </authorList>
    </citation>
    <scope>NUCLEOTIDE SEQUENCE [MRNA]</scope>
    <source>
        <tissue>Venom duct</tissue>
    </source>
</reference>
<sequence>MGMRMMFTVFLLVVLATTVVSFTSDRASEGRNAAAKDKASDLVALTVRGCCAIRECRLQNAAYCGGIY</sequence>
<name>CA12_CONCB</name>
<organism>
    <name type="scientific">Conus caracteristicus</name>
    <name type="common">Characteristic cone</name>
    <dbReference type="NCBI Taxonomy" id="89440"/>
    <lineage>
        <taxon>Eukaryota</taxon>
        <taxon>Metazoa</taxon>
        <taxon>Spiralia</taxon>
        <taxon>Lophotrochozoa</taxon>
        <taxon>Mollusca</taxon>
        <taxon>Gastropoda</taxon>
        <taxon>Caenogastropoda</taxon>
        <taxon>Neogastropoda</taxon>
        <taxon>Conoidea</taxon>
        <taxon>Conidae</taxon>
        <taxon>Conus</taxon>
    </lineage>
</organism>
<proteinExistence type="inferred from homology"/>
<accession>P0C1W0</accession>
<keyword id="KW-0008">Acetylcholine receptor inhibiting toxin</keyword>
<keyword id="KW-0027">Amidation</keyword>
<keyword id="KW-1015">Disulfide bond</keyword>
<keyword id="KW-0872">Ion channel impairing toxin</keyword>
<keyword id="KW-0528">Neurotoxin</keyword>
<keyword id="KW-0629">Postsynaptic neurotoxin</keyword>
<keyword id="KW-0964">Secreted</keyword>
<keyword id="KW-0732">Signal</keyword>
<keyword id="KW-0765">Sulfation</keyword>
<keyword id="KW-0800">Toxin</keyword>
<feature type="signal peptide" evidence="4">
    <location>
        <begin position="1"/>
        <end position="21"/>
    </location>
</feature>
<feature type="propeptide" id="PRO_0000249785" evidence="1">
    <location>
        <begin position="22"/>
        <end position="48"/>
    </location>
</feature>
<feature type="peptide" id="PRO_0000249786" description="Alpha-conotoxin-like Ca1.2">
    <location>
        <begin position="49"/>
        <end position="64"/>
    </location>
</feature>
<feature type="propeptide" id="PRO_0000249787" evidence="1">
    <location>
        <begin position="65"/>
        <end position="68"/>
    </location>
</feature>
<feature type="region of interest" description="Lacks the Ser-Xaa-Pro motif that is crucial for potent interaction with nAChR" evidence="5">
    <location>
        <begin position="52"/>
        <end position="54"/>
    </location>
</feature>
<feature type="modified residue" description="Sulfotyrosine" evidence="1">
    <location>
        <position position="63"/>
    </location>
</feature>
<feature type="modified residue" description="Cysteine amide" evidence="1">
    <location>
        <position position="64"/>
    </location>
</feature>
<feature type="disulfide bond" evidence="2">
    <location>
        <begin position="50"/>
        <end position="56"/>
    </location>
</feature>
<feature type="disulfide bond" evidence="2">
    <location>
        <begin position="51"/>
        <end position="64"/>
    </location>
</feature>
<protein>
    <recommendedName>
        <fullName>Alpha-conotoxin-like Ca1.2</fullName>
    </recommendedName>
</protein>
<comment type="function">
    <text evidence="3">Alpha-conotoxins act on postsynaptic membranes, they bind to the nicotinic acetylcholine receptors (nAChR) and thus inhibit them (By similarity). Has possibly a distinct nAChR binding mode from other alpha-conotoxins, due to a different three residue motif (lacks the Ser-Xaa-Pro motif) (By similarity).</text>
</comment>
<comment type="subcellular location">
    <subcellularLocation>
        <location evidence="5">Secreted</location>
    </subcellularLocation>
</comment>
<comment type="tissue specificity">
    <text evidence="5">Expressed by the venom duct.</text>
</comment>
<comment type="domain">
    <text evidence="5">The cysteine framework is I (CC-C-C). Alpha4/7 pattern.</text>
</comment>
<comment type="similarity">
    <text evidence="5">Belongs to the conotoxin A superfamily.</text>
</comment>
<evidence type="ECO:0000250" key="1"/>
<evidence type="ECO:0000250" key="2">
    <source>
        <dbReference type="UniProtKB" id="P56636"/>
    </source>
</evidence>
<evidence type="ECO:0000250" key="3">
    <source>
        <dbReference type="UniProtKB" id="Q2I2R8"/>
    </source>
</evidence>
<evidence type="ECO:0000255" key="4"/>
<evidence type="ECO:0000305" key="5"/>
<dbReference type="ConoServer" id="13">
    <property type="toxin name" value="Ca1.2 precursor"/>
</dbReference>
<dbReference type="GO" id="GO:0005576">
    <property type="term" value="C:extracellular region"/>
    <property type="evidence" value="ECO:0007669"/>
    <property type="project" value="UniProtKB-SubCell"/>
</dbReference>
<dbReference type="GO" id="GO:0035792">
    <property type="term" value="C:host cell postsynaptic membrane"/>
    <property type="evidence" value="ECO:0007669"/>
    <property type="project" value="UniProtKB-KW"/>
</dbReference>
<dbReference type="GO" id="GO:0030550">
    <property type="term" value="F:acetylcholine receptor inhibitor activity"/>
    <property type="evidence" value="ECO:0007669"/>
    <property type="project" value="UniProtKB-KW"/>
</dbReference>
<dbReference type="GO" id="GO:0099106">
    <property type="term" value="F:ion channel regulator activity"/>
    <property type="evidence" value="ECO:0007669"/>
    <property type="project" value="UniProtKB-KW"/>
</dbReference>
<dbReference type="GO" id="GO:0090729">
    <property type="term" value="F:toxin activity"/>
    <property type="evidence" value="ECO:0007669"/>
    <property type="project" value="UniProtKB-KW"/>
</dbReference>
<dbReference type="InterPro" id="IPR009958">
    <property type="entry name" value="Conotoxin_a-typ"/>
</dbReference>
<dbReference type="Pfam" id="PF07365">
    <property type="entry name" value="Toxin_8"/>
    <property type="match status" value="1"/>
</dbReference>